<sequence length="177" mass="18904">MSRVAKAPVVVPAGVDVKINGQVITIKGKNGELTRTLNDAVEVKHADNTLTFGPRDGYADGWAQAGTARALLNSMVIGVTEGFTKKLQLVGVGYRAAVKGNVINLSLGFSHPVDHQLPAGITAECPTQTEIVLKGADKQVIGQVAADLRAYRRPEPYKGKGVRYADEVVRTKEAKKK</sequence>
<name>RL6_ECODH</name>
<gene>
    <name evidence="1" type="primary">rplF</name>
    <name type="ordered locus">ECDH10B_3480</name>
</gene>
<keyword id="KW-0007">Acetylation</keyword>
<keyword id="KW-0687">Ribonucleoprotein</keyword>
<keyword id="KW-0689">Ribosomal protein</keyword>
<keyword id="KW-0694">RNA-binding</keyword>
<keyword id="KW-0699">rRNA-binding</keyword>
<proteinExistence type="inferred from homology"/>
<dbReference type="EMBL" id="CP000948">
    <property type="protein sequence ID" value="ACB04367.1"/>
    <property type="molecule type" value="Genomic_DNA"/>
</dbReference>
<dbReference type="RefSeq" id="WP_000091945.1">
    <property type="nucleotide sequence ID" value="NC_010473.1"/>
</dbReference>
<dbReference type="SMR" id="B1X6F7"/>
<dbReference type="GeneID" id="86948169"/>
<dbReference type="KEGG" id="ecd:ECDH10B_3480"/>
<dbReference type="HOGENOM" id="CLU_065464_1_2_6"/>
<dbReference type="GO" id="GO:0022625">
    <property type="term" value="C:cytosolic large ribosomal subunit"/>
    <property type="evidence" value="ECO:0007669"/>
    <property type="project" value="TreeGrafter"/>
</dbReference>
<dbReference type="GO" id="GO:0019843">
    <property type="term" value="F:rRNA binding"/>
    <property type="evidence" value="ECO:0007669"/>
    <property type="project" value="UniProtKB-UniRule"/>
</dbReference>
<dbReference type="GO" id="GO:0003735">
    <property type="term" value="F:structural constituent of ribosome"/>
    <property type="evidence" value="ECO:0007669"/>
    <property type="project" value="InterPro"/>
</dbReference>
<dbReference type="GO" id="GO:0002181">
    <property type="term" value="P:cytoplasmic translation"/>
    <property type="evidence" value="ECO:0007669"/>
    <property type="project" value="TreeGrafter"/>
</dbReference>
<dbReference type="FunFam" id="3.90.930.12:FF:000001">
    <property type="entry name" value="50S ribosomal protein L6"/>
    <property type="match status" value="1"/>
</dbReference>
<dbReference type="FunFam" id="3.90.930.12:FF:000002">
    <property type="entry name" value="50S ribosomal protein L6"/>
    <property type="match status" value="1"/>
</dbReference>
<dbReference type="Gene3D" id="3.90.930.12">
    <property type="entry name" value="Ribosomal protein L6, alpha-beta domain"/>
    <property type="match status" value="2"/>
</dbReference>
<dbReference type="HAMAP" id="MF_01365_B">
    <property type="entry name" value="Ribosomal_uL6_B"/>
    <property type="match status" value="1"/>
</dbReference>
<dbReference type="InterPro" id="IPR000702">
    <property type="entry name" value="Ribosomal_uL6-like"/>
</dbReference>
<dbReference type="InterPro" id="IPR036789">
    <property type="entry name" value="Ribosomal_uL6-like_a/b-dom_sf"/>
</dbReference>
<dbReference type="InterPro" id="IPR020040">
    <property type="entry name" value="Ribosomal_uL6_a/b-dom"/>
</dbReference>
<dbReference type="InterPro" id="IPR019906">
    <property type="entry name" value="Ribosomal_uL6_bac-type"/>
</dbReference>
<dbReference type="InterPro" id="IPR002358">
    <property type="entry name" value="Ribosomal_uL6_CS"/>
</dbReference>
<dbReference type="NCBIfam" id="TIGR03654">
    <property type="entry name" value="L6_bact"/>
    <property type="match status" value="1"/>
</dbReference>
<dbReference type="PANTHER" id="PTHR11655">
    <property type="entry name" value="60S/50S RIBOSOMAL PROTEIN L6/L9"/>
    <property type="match status" value="1"/>
</dbReference>
<dbReference type="PANTHER" id="PTHR11655:SF14">
    <property type="entry name" value="LARGE RIBOSOMAL SUBUNIT PROTEIN UL6M"/>
    <property type="match status" value="1"/>
</dbReference>
<dbReference type="Pfam" id="PF00347">
    <property type="entry name" value="Ribosomal_L6"/>
    <property type="match status" value="2"/>
</dbReference>
<dbReference type="PIRSF" id="PIRSF002162">
    <property type="entry name" value="Ribosomal_L6"/>
    <property type="match status" value="1"/>
</dbReference>
<dbReference type="PRINTS" id="PR00059">
    <property type="entry name" value="RIBOSOMALL6"/>
</dbReference>
<dbReference type="SUPFAM" id="SSF56053">
    <property type="entry name" value="Ribosomal protein L6"/>
    <property type="match status" value="2"/>
</dbReference>
<dbReference type="PROSITE" id="PS00525">
    <property type="entry name" value="RIBOSOMAL_L6_1"/>
    <property type="match status" value="1"/>
</dbReference>
<evidence type="ECO:0000255" key="1">
    <source>
        <dbReference type="HAMAP-Rule" id="MF_01365"/>
    </source>
</evidence>
<evidence type="ECO:0000305" key="2"/>
<protein>
    <recommendedName>
        <fullName evidence="1">Large ribosomal subunit protein uL6</fullName>
    </recommendedName>
    <alternativeName>
        <fullName evidence="2">50S ribosomal protein L6</fullName>
    </alternativeName>
</protein>
<organism>
    <name type="scientific">Escherichia coli (strain K12 / DH10B)</name>
    <dbReference type="NCBI Taxonomy" id="316385"/>
    <lineage>
        <taxon>Bacteria</taxon>
        <taxon>Pseudomonadati</taxon>
        <taxon>Pseudomonadota</taxon>
        <taxon>Gammaproteobacteria</taxon>
        <taxon>Enterobacterales</taxon>
        <taxon>Enterobacteriaceae</taxon>
        <taxon>Escherichia</taxon>
    </lineage>
</organism>
<feature type="chain" id="PRO_1000143985" description="Large ribosomal subunit protein uL6">
    <location>
        <begin position="1"/>
        <end position="177"/>
    </location>
</feature>
<feature type="modified residue" description="N6-acetyllysine" evidence="1">
    <location>
        <position position="44"/>
    </location>
</feature>
<accession>B1X6F7</accession>
<reference key="1">
    <citation type="journal article" date="2008" name="J. Bacteriol.">
        <title>The complete genome sequence of Escherichia coli DH10B: insights into the biology of a laboratory workhorse.</title>
        <authorList>
            <person name="Durfee T."/>
            <person name="Nelson R."/>
            <person name="Baldwin S."/>
            <person name="Plunkett G. III"/>
            <person name="Burland V."/>
            <person name="Mau B."/>
            <person name="Petrosino J.F."/>
            <person name="Qin X."/>
            <person name="Muzny D.M."/>
            <person name="Ayele M."/>
            <person name="Gibbs R.A."/>
            <person name="Csorgo B."/>
            <person name="Posfai G."/>
            <person name="Weinstock G.M."/>
            <person name="Blattner F.R."/>
        </authorList>
    </citation>
    <scope>NUCLEOTIDE SEQUENCE [LARGE SCALE GENOMIC DNA]</scope>
    <source>
        <strain>K12 / DH10B</strain>
    </source>
</reference>
<comment type="function">
    <text evidence="1">This protein binds to the 23S rRNA, and is important in its secondary structure. It is located near the subunit interface in the base of the L7/L12 stalk, and near the tRNA binding site of the peptidyltransferase center.</text>
</comment>
<comment type="subunit">
    <text evidence="1">Part of the 50S ribosomal subunit.</text>
</comment>
<comment type="similarity">
    <text evidence="1">Belongs to the universal ribosomal protein uL6 family.</text>
</comment>